<comment type="function">
    <text evidence="1">Specifically methylates the N7 position of a guanine in 16S rRNA.</text>
</comment>
<comment type="subcellular location">
    <subcellularLocation>
        <location evidence="1">Cytoplasm</location>
    </subcellularLocation>
</comment>
<comment type="similarity">
    <text evidence="1">Belongs to the methyltransferase superfamily. RNA methyltransferase RsmG family.</text>
</comment>
<proteinExistence type="inferred from homology"/>
<organism>
    <name type="scientific">Streptococcus sanguinis (strain SK36)</name>
    <dbReference type="NCBI Taxonomy" id="388919"/>
    <lineage>
        <taxon>Bacteria</taxon>
        <taxon>Bacillati</taxon>
        <taxon>Bacillota</taxon>
        <taxon>Bacilli</taxon>
        <taxon>Lactobacillales</taxon>
        <taxon>Streptococcaceae</taxon>
        <taxon>Streptococcus</taxon>
    </lineage>
</organism>
<accession>A3CLJ1</accession>
<protein>
    <recommendedName>
        <fullName evidence="1">Ribosomal RNA small subunit methyltransferase G</fullName>
        <ecNumber evidence="1">2.1.1.-</ecNumber>
    </recommendedName>
    <alternativeName>
        <fullName evidence="1">16S rRNA 7-methylguanosine methyltransferase</fullName>
        <shortName evidence="1">16S rRNA m7G methyltransferase</shortName>
    </alternativeName>
</protein>
<gene>
    <name evidence="1" type="primary">rsmG</name>
    <name type="ordered locus">SSA_0605</name>
</gene>
<name>RSMG_STRSV</name>
<reference key="1">
    <citation type="journal article" date="2007" name="J. Bacteriol.">
        <title>Genome of the opportunistic pathogen Streptococcus sanguinis.</title>
        <authorList>
            <person name="Xu P."/>
            <person name="Alves J.M."/>
            <person name="Kitten T."/>
            <person name="Brown A."/>
            <person name="Chen Z."/>
            <person name="Ozaki L.S."/>
            <person name="Manque P."/>
            <person name="Ge X."/>
            <person name="Serrano M.G."/>
            <person name="Puiu D."/>
            <person name="Hendricks S."/>
            <person name="Wang Y."/>
            <person name="Chaplin M.D."/>
            <person name="Akan D."/>
            <person name="Paik S."/>
            <person name="Peterson D.L."/>
            <person name="Macrina F.L."/>
            <person name="Buck G.A."/>
        </authorList>
    </citation>
    <scope>NUCLEOTIDE SEQUENCE [LARGE SCALE GENOMIC DNA]</scope>
    <source>
        <strain>SK36</strain>
    </source>
</reference>
<evidence type="ECO:0000255" key="1">
    <source>
        <dbReference type="HAMAP-Rule" id="MF_00074"/>
    </source>
</evidence>
<evidence type="ECO:0000256" key="2">
    <source>
        <dbReference type="SAM" id="MobiDB-lite"/>
    </source>
</evidence>
<sequence>MTPQEFYQLLAQQGIELTDRQKDQFERYFELLVEWNEKINLTAITEKNEVYLKHFYDSIAPVLQGLIDNQELKLLDIGAGAGFPSLPMKIICPQLDVTIIDSLNKRINFLKLLAEELGLDKVHFYHGRAEDFAQDKAFRAQFDLVTARAVARMQILSELTIPYLKVGGKLLALKASNAPEELEEAKNALNLLFSKVQDNLSYALPNGDPRFITVVEKKKETPNKYPRKAGMPNKRPL</sequence>
<keyword id="KW-0963">Cytoplasm</keyword>
<keyword id="KW-0489">Methyltransferase</keyword>
<keyword id="KW-1185">Reference proteome</keyword>
<keyword id="KW-0698">rRNA processing</keyword>
<keyword id="KW-0949">S-adenosyl-L-methionine</keyword>
<keyword id="KW-0808">Transferase</keyword>
<feature type="chain" id="PRO_1000010227" description="Ribosomal RNA small subunit methyltransferase G">
    <location>
        <begin position="1"/>
        <end position="237"/>
    </location>
</feature>
<feature type="region of interest" description="Disordered" evidence="2">
    <location>
        <begin position="218"/>
        <end position="237"/>
    </location>
</feature>
<feature type="binding site" evidence="1">
    <location>
        <position position="78"/>
    </location>
    <ligand>
        <name>S-adenosyl-L-methionine</name>
        <dbReference type="ChEBI" id="CHEBI:59789"/>
    </ligand>
</feature>
<feature type="binding site" evidence="1">
    <location>
        <position position="83"/>
    </location>
    <ligand>
        <name>S-adenosyl-L-methionine</name>
        <dbReference type="ChEBI" id="CHEBI:59789"/>
    </ligand>
</feature>
<feature type="binding site" evidence="1">
    <location>
        <begin position="129"/>
        <end position="130"/>
    </location>
    <ligand>
        <name>S-adenosyl-L-methionine</name>
        <dbReference type="ChEBI" id="CHEBI:59789"/>
    </ligand>
</feature>
<feature type="binding site" evidence="1">
    <location>
        <position position="148"/>
    </location>
    <ligand>
        <name>S-adenosyl-L-methionine</name>
        <dbReference type="ChEBI" id="CHEBI:59789"/>
    </ligand>
</feature>
<dbReference type="EC" id="2.1.1.-" evidence="1"/>
<dbReference type="EMBL" id="CP000387">
    <property type="protein sequence ID" value="ABN44046.1"/>
    <property type="molecule type" value="Genomic_DNA"/>
</dbReference>
<dbReference type="RefSeq" id="WP_011836617.1">
    <property type="nucleotide sequence ID" value="NC_009009.1"/>
</dbReference>
<dbReference type="RefSeq" id="YP_001034596.1">
    <property type="nucleotide sequence ID" value="NC_009009.1"/>
</dbReference>
<dbReference type="SMR" id="A3CLJ1"/>
<dbReference type="STRING" id="388919.SSA_0605"/>
<dbReference type="KEGG" id="ssa:SSA_0605"/>
<dbReference type="PATRIC" id="fig|388919.9.peg.583"/>
<dbReference type="eggNOG" id="COG0357">
    <property type="taxonomic scope" value="Bacteria"/>
</dbReference>
<dbReference type="HOGENOM" id="CLU_065341_0_2_9"/>
<dbReference type="OrthoDB" id="9808773at2"/>
<dbReference type="Proteomes" id="UP000002148">
    <property type="component" value="Chromosome"/>
</dbReference>
<dbReference type="GO" id="GO:0005829">
    <property type="term" value="C:cytosol"/>
    <property type="evidence" value="ECO:0007669"/>
    <property type="project" value="TreeGrafter"/>
</dbReference>
<dbReference type="GO" id="GO:0070043">
    <property type="term" value="F:rRNA (guanine-N7-)-methyltransferase activity"/>
    <property type="evidence" value="ECO:0007669"/>
    <property type="project" value="UniProtKB-UniRule"/>
</dbReference>
<dbReference type="CDD" id="cd02440">
    <property type="entry name" value="AdoMet_MTases"/>
    <property type="match status" value="1"/>
</dbReference>
<dbReference type="FunFam" id="3.40.50.150:FF:000041">
    <property type="entry name" value="Ribosomal RNA small subunit methyltransferase G"/>
    <property type="match status" value="1"/>
</dbReference>
<dbReference type="Gene3D" id="3.40.50.150">
    <property type="entry name" value="Vaccinia Virus protein VP39"/>
    <property type="match status" value="1"/>
</dbReference>
<dbReference type="HAMAP" id="MF_00074">
    <property type="entry name" value="16SrRNA_methyltr_G"/>
    <property type="match status" value="1"/>
</dbReference>
<dbReference type="InterPro" id="IPR003682">
    <property type="entry name" value="rRNA_ssu_MeTfrase_G"/>
</dbReference>
<dbReference type="InterPro" id="IPR029063">
    <property type="entry name" value="SAM-dependent_MTases_sf"/>
</dbReference>
<dbReference type="NCBIfam" id="TIGR00138">
    <property type="entry name" value="rsmG_gidB"/>
    <property type="match status" value="1"/>
</dbReference>
<dbReference type="PANTHER" id="PTHR31760">
    <property type="entry name" value="S-ADENOSYL-L-METHIONINE-DEPENDENT METHYLTRANSFERASES SUPERFAMILY PROTEIN"/>
    <property type="match status" value="1"/>
</dbReference>
<dbReference type="PANTHER" id="PTHR31760:SF0">
    <property type="entry name" value="S-ADENOSYL-L-METHIONINE-DEPENDENT METHYLTRANSFERASES SUPERFAMILY PROTEIN"/>
    <property type="match status" value="1"/>
</dbReference>
<dbReference type="Pfam" id="PF02527">
    <property type="entry name" value="GidB"/>
    <property type="match status" value="1"/>
</dbReference>
<dbReference type="PIRSF" id="PIRSF003078">
    <property type="entry name" value="GidB"/>
    <property type="match status" value="1"/>
</dbReference>
<dbReference type="SUPFAM" id="SSF53335">
    <property type="entry name" value="S-adenosyl-L-methionine-dependent methyltransferases"/>
    <property type="match status" value="1"/>
</dbReference>